<keyword id="KW-1015">Disulfide bond</keyword>
<keyword id="KW-0872">Ion channel impairing toxin</keyword>
<keyword id="KW-0166">Nematocyst</keyword>
<keyword id="KW-0646">Protease inhibitor</keyword>
<keyword id="KW-0964">Secreted</keyword>
<keyword id="KW-0722">Serine protease inhibitor</keyword>
<keyword id="KW-0800">Toxin</keyword>
<comment type="function">
    <text evidence="1 5 6 7">This recombinant serine protease inhibitor inhibits trypsin (Ki=100 nM) (Ref.3). It may also inhibit the TRPV1 receptor of the pain pathway (By similarity). It possesses anti-inflammatory activity in vitro (Ref.3). It blocks histamine influence on intracellular calcium concentration in murine bone marrow-derived macrophages (84% inhibition at 10 uM and 67.2% at 1 uM), which can indicate inhibition of H1-histamine receptor (HRH1) (Ref.3). In vitro, it shows cytoprotective activity in the oxidative stress agent 6-hydroxydopamine (6-OHDA)-induced neurotoxicity model (PubMed:33802055). In this model, it decreases reactive oxygen species (ROS) level, and increases cell viability in a correlated manner (PubMed:33802055). In vivo, it shows analgesic activity, since it increases hot plate and tail flick withdrawal latencies, when using a mice thermal pain stimulation model (PubMed:25937220).</text>
</comment>
<comment type="subcellular location">
    <subcellularLocation>
        <location evidence="9">Secreted</location>
    </subcellularLocation>
    <subcellularLocation>
        <location evidence="9">Nematocyst</location>
    </subcellularLocation>
</comment>
<comment type="miscellaneous">
    <text evidence="6">Negative results: has no activity on Kv1.1/KCNA1, Kv1.2/KCNA2, Kv1.3/KCNA3, Kv1.4/KCNA4, Kv1.5/KCNA5, Kv1.6/KCNA6, Shaker, Kv11.1/KCNH2/ERG1 potassium channels and on TRPV1, the capsaicin receptors.</text>
</comment>
<comment type="miscellaneous">
    <text evidence="9">A synonymy between H.magnifica and R.crispa is controversial.</text>
</comment>
<comment type="similarity">
    <text evidence="9">Belongs to the venom Kunitz-type family. Sea anemone type 2 potassium channel toxin subfamily.</text>
</comment>
<feature type="chain" id="PRO_0000454107" description="PI-stichotoxin-Hcr2p" evidence="9">
    <location>
        <begin position="1"/>
        <end position="56"/>
    </location>
</feature>
<feature type="domain" description="BPTI/Kunitz inhibitor" evidence="4">
    <location>
        <begin position="4"/>
        <end position="54"/>
    </location>
</feature>
<feature type="site" description="Reactive bond for trypsin" evidence="2">
    <location>
        <begin position="14"/>
        <end position="15"/>
    </location>
</feature>
<feature type="site" description="May play a key role in exhibiting antihistamine activity" evidence="10">
    <location>
        <position position="17"/>
    </location>
</feature>
<feature type="site" description="May play a key role in exhibiting antihistamine activity" evidence="10">
    <location>
        <position position="34"/>
    </location>
</feature>
<feature type="disulfide bond" evidence="3">
    <location>
        <begin position="4"/>
        <end position="54"/>
    </location>
</feature>
<feature type="disulfide bond" evidence="3">
    <location>
        <begin position="13"/>
        <end position="37"/>
    </location>
</feature>
<feature type="disulfide bond" evidence="3">
    <location>
        <begin position="29"/>
        <end position="50"/>
    </location>
</feature>
<organism>
    <name type="scientific">Radianthus crispa</name>
    <name type="common">Leathery sea anemone</name>
    <name type="synonym">Heteractis crispa</name>
    <dbReference type="NCBI Taxonomy" id="3122430"/>
    <lineage>
        <taxon>Eukaryota</taxon>
        <taxon>Metazoa</taxon>
        <taxon>Cnidaria</taxon>
        <taxon>Anthozoa</taxon>
        <taxon>Hexacorallia</taxon>
        <taxon>Actiniaria</taxon>
        <taxon>Stichodactylidae</taxon>
        <taxon>Radianthus</taxon>
    </lineage>
</organism>
<accession>P0DV06</accession>
<protein>
    <recommendedName>
        <fullName evidence="9">PI-stichotoxin-Hcr2p</fullName>
        <shortName evidence="9">PI-SHTX-Hcr2p</shortName>
    </recommendedName>
    <alternativeName>
        <fullName evidence="8">Kunitz-type serine protease inhibitor HCGS1.36</fullName>
    </alternativeName>
</protein>
<dbReference type="SMR" id="P0DV06"/>
<dbReference type="GO" id="GO:0005615">
    <property type="term" value="C:extracellular space"/>
    <property type="evidence" value="ECO:0007669"/>
    <property type="project" value="TreeGrafter"/>
</dbReference>
<dbReference type="GO" id="GO:0042151">
    <property type="term" value="C:nematocyst"/>
    <property type="evidence" value="ECO:0007669"/>
    <property type="project" value="UniProtKB-SubCell"/>
</dbReference>
<dbReference type="GO" id="GO:0099106">
    <property type="term" value="F:ion channel regulator activity"/>
    <property type="evidence" value="ECO:0007669"/>
    <property type="project" value="UniProtKB-KW"/>
</dbReference>
<dbReference type="GO" id="GO:0004867">
    <property type="term" value="F:serine-type endopeptidase inhibitor activity"/>
    <property type="evidence" value="ECO:0007669"/>
    <property type="project" value="UniProtKB-KW"/>
</dbReference>
<dbReference type="GO" id="GO:0090729">
    <property type="term" value="F:toxin activity"/>
    <property type="evidence" value="ECO:0007669"/>
    <property type="project" value="UniProtKB-KW"/>
</dbReference>
<dbReference type="CDD" id="cd22618">
    <property type="entry name" value="Kunitz_SHPI"/>
    <property type="match status" value="1"/>
</dbReference>
<dbReference type="FunFam" id="4.10.410.10:FF:000021">
    <property type="entry name" value="Serine protease inhibitor, putative"/>
    <property type="match status" value="1"/>
</dbReference>
<dbReference type="Gene3D" id="4.10.410.10">
    <property type="entry name" value="Pancreatic trypsin inhibitor Kunitz domain"/>
    <property type="match status" value="1"/>
</dbReference>
<dbReference type="InterPro" id="IPR002223">
    <property type="entry name" value="Kunitz_BPTI"/>
</dbReference>
<dbReference type="InterPro" id="IPR036880">
    <property type="entry name" value="Kunitz_BPTI_sf"/>
</dbReference>
<dbReference type="InterPro" id="IPR020901">
    <property type="entry name" value="Prtase_inh_Kunz-CS"/>
</dbReference>
<dbReference type="InterPro" id="IPR050098">
    <property type="entry name" value="TFPI/VKTCI-like"/>
</dbReference>
<dbReference type="PANTHER" id="PTHR10083:SF374">
    <property type="entry name" value="BPTI_KUNITZ INHIBITOR DOMAIN-CONTAINING PROTEIN"/>
    <property type="match status" value="1"/>
</dbReference>
<dbReference type="PANTHER" id="PTHR10083">
    <property type="entry name" value="KUNITZ-TYPE PROTEASE INHIBITOR-RELATED"/>
    <property type="match status" value="1"/>
</dbReference>
<dbReference type="Pfam" id="PF00014">
    <property type="entry name" value="Kunitz_BPTI"/>
    <property type="match status" value="1"/>
</dbReference>
<dbReference type="PRINTS" id="PR00759">
    <property type="entry name" value="BASICPTASE"/>
</dbReference>
<dbReference type="SMART" id="SM00131">
    <property type="entry name" value="KU"/>
    <property type="match status" value="1"/>
</dbReference>
<dbReference type="SUPFAM" id="SSF57362">
    <property type="entry name" value="BPTI-like"/>
    <property type="match status" value="1"/>
</dbReference>
<dbReference type="PROSITE" id="PS00280">
    <property type="entry name" value="BPTI_KUNITZ_1"/>
    <property type="match status" value="1"/>
</dbReference>
<dbReference type="PROSITE" id="PS50279">
    <property type="entry name" value="BPTI_KUNITZ_2"/>
    <property type="match status" value="1"/>
</dbReference>
<proteinExistence type="inferred from homology"/>
<sequence length="56" mass="6181">GSICLEPKVVGPCTAYFRRFYYDSETGKCTPFIHGGCEGNGNNFETLRACRAICRA</sequence>
<evidence type="ECO:0000250" key="1">
    <source>
        <dbReference type="UniProtKB" id="B2G331"/>
    </source>
</evidence>
<evidence type="ECO:0000250" key="2">
    <source>
        <dbReference type="UniProtKB" id="P00974"/>
    </source>
</evidence>
<evidence type="ECO:0000250" key="3">
    <source>
        <dbReference type="UniProtKB" id="P31713"/>
    </source>
</evidence>
<evidence type="ECO:0000255" key="4">
    <source>
        <dbReference type="PROSITE-ProRule" id="PRU00031"/>
    </source>
</evidence>
<evidence type="ECO:0000269" key="5">
    <source>
    </source>
</evidence>
<evidence type="ECO:0000269" key="6">
    <source>
    </source>
</evidence>
<evidence type="ECO:0000269" key="7">
    <source ref="3"/>
</evidence>
<evidence type="ECO:0000303" key="8">
    <source ref="3"/>
</evidence>
<evidence type="ECO:0000305" key="9"/>
<evidence type="ECO:0000305" key="10">
    <source ref="3"/>
</evidence>
<name>VKT2P_RADCR</name>
<reference key="1">
    <citation type="journal article" date="2012" name="Peptides">
        <title>A new multigene superfamily of Kunitz-type protease inhibitors from sea anemone Heteractis crispa.</title>
        <authorList>
            <person name="Isaeva M.P."/>
            <person name="Chausova V.E."/>
            <person name="Zelepuga E.A."/>
            <person name="Guzev K.V."/>
            <person name="Tabakmakher V.M."/>
            <person name="Monastyrnaya M.M."/>
            <person name="Kozlovskaya E.P."/>
        </authorList>
    </citation>
    <scope>NUCLEOTIDE SEQUENCE [MRNA]</scope>
    <scope>3D-STRUCTURE MODELING</scope>
</reference>
<reference key="2">
    <citation type="journal article" date="2015" name="Dokl. Biochem. Biophys.">
        <title>Analgesic effect of novel Kunitz-type polypeptides of the sea anemone Heteractis crispa.</title>
        <authorList>
            <person name="Tabakmakher V.M."/>
            <person name="Sintsova O.V."/>
            <person name="Krivoshapko O.N."/>
            <person name="Zelepuga E.A."/>
            <person name="Monastyrnaya M.M."/>
            <person name="Kozlovskaya E.P."/>
        </authorList>
    </citation>
    <scope>FUNCTION</scope>
</reference>
<reference key="3">
    <citation type="journal article" date="2017" name="Russ. J. Bioorg. Chem.">
        <title>Kunitz-type peptides of the sea anemone Heteractis crispa: potential anti-inflammatory compounds.</title>
        <authorList>
            <person name="Sintsovaa O.V."/>
            <person name="Pislyagina E.A."/>
            <person name="Gladkikha I.N."/>
            <person name="Monastyrnayaa M.M."/>
            <person name="Menchinskayaa E.S."/>
            <person name="Leychenkoa E.V."/>
            <person name="Aminina D.L."/>
            <person name="Kozlovskaya E.P."/>
        </authorList>
    </citation>
    <scope>FUNCTION</scope>
    <scope>RECOMBINANT EXPRESSION</scope>
</reference>
<reference key="4">
    <citation type="journal article" date="2021" name="Biomedicines">
        <title>Sea anemone kunitz-type peptides demonstrate neuroprotective activity in the 6-hydroxydopamine induced neurotoxicity model.</title>
        <authorList>
            <person name="Sintsova O."/>
            <person name="Gladkikh I."/>
            <person name="Monastyrnaya M."/>
            <person name="Tabakmakher V."/>
            <person name="Yurchenko E."/>
            <person name="Menchinskaya E."/>
            <person name="Pislyagin E."/>
            <person name="Andreev Y."/>
            <person name="Kozlov S."/>
            <person name="Peigneur S."/>
            <person name="Tytgat J."/>
            <person name="Aminin D."/>
            <person name="Kozlovskaya E."/>
            <person name="Leychenko E."/>
        </authorList>
    </citation>
    <scope>FUNCTION</scope>
    <scope>RECOMBINANT EXPRESSION</scope>
</reference>